<proteinExistence type="evidence at protein level"/>
<organism>
    <name type="scientific">Arbacia punctulata</name>
    <name type="common">Punctuate sea urchin</name>
    <dbReference type="NCBI Taxonomy" id="7641"/>
    <lineage>
        <taxon>Eukaryota</taxon>
        <taxon>Metazoa</taxon>
        <taxon>Echinodermata</taxon>
        <taxon>Eleutherozoa</taxon>
        <taxon>Echinozoa</taxon>
        <taxon>Echinoidea</taxon>
        <taxon>Euechinoidea</taxon>
        <taxon>Echinacea</taxon>
        <taxon>Arbacioida</taxon>
        <taxon>Arbaciidae</taxon>
        <taxon>Arbacia</taxon>
    </lineage>
</organism>
<evidence type="ECO:0000255" key="1"/>
<evidence type="ECO:0000255" key="2">
    <source>
        <dbReference type="PROSITE-ProRule" id="PRU00159"/>
    </source>
</evidence>
<name>GCY_ARBPU</name>
<feature type="signal peptide">
    <location>
        <begin position="1"/>
        <end position="21"/>
    </location>
</feature>
<feature type="chain" id="PRO_0000012389" description="Resact receptor">
    <location>
        <begin position="22"/>
        <end position="986"/>
    </location>
</feature>
<feature type="topological domain" description="Extracellular" evidence="1">
    <location>
        <begin position="22"/>
        <end position="507"/>
    </location>
</feature>
<feature type="transmembrane region" description="Helical" evidence="1">
    <location>
        <begin position="508"/>
        <end position="528"/>
    </location>
</feature>
<feature type="topological domain" description="Cytoplasmic" evidence="1">
    <location>
        <begin position="529"/>
        <end position="986"/>
    </location>
</feature>
<feature type="domain" description="Protein kinase" evidence="2">
    <location>
        <begin position="568"/>
        <end position="836"/>
    </location>
</feature>
<feature type="glycosylation site" description="N-linked (GlcNAc...) asparagine" evidence="1">
    <location>
        <position position="185"/>
    </location>
</feature>
<feature type="glycosylation site" description="N-linked (GlcNAc...) asparagine" evidence="1">
    <location>
        <position position="361"/>
    </location>
</feature>
<feature type="glycosylation site" description="N-linked (GlcNAc...) asparagine" evidence="1">
    <location>
        <position position="410"/>
    </location>
</feature>
<protein>
    <recommendedName>
        <fullName>Resact receptor</fullName>
        <ecNumber>4.6.1.2</ecNumber>
    </recommendedName>
    <alternativeName>
        <fullName>Guanylate cyclase</fullName>
    </alternativeName>
</protein>
<comment type="function">
    <text>Implicated as a cell-surface receptor on spermatozoa for 'resact' a chemotactic peptide, and on various other cells as a receptor for atrial natriuretic peptide.</text>
</comment>
<comment type="catalytic activity">
    <reaction>
        <text>GTP = 3',5'-cyclic GMP + diphosphate</text>
        <dbReference type="Rhea" id="RHEA:13665"/>
        <dbReference type="ChEBI" id="CHEBI:33019"/>
        <dbReference type="ChEBI" id="CHEBI:37565"/>
        <dbReference type="ChEBI" id="CHEBI:57746"/>
        <dbReference type="EC" id="4.6.1.2"/>
    </reaction>
</comment>
<comment type="subcellular location">
    <subcellularLocation>
        <location>Membrane</location>
        <topology>Single-pass type I membrane protein</topology>
    </subcellularLocation>
</comment>
<accession>P11528</accession>
<reference key="1">
    <citation type="journal article" date="1988" name="Nature">
        <title>Membrane guanylate cyclase is a cell-surface receptor with homology to protein kinases.</title>
        <authorList>
            <person name="Singh S."/>
            <person name="Lowe D.G."/>
            <person name="Thorpe D.S."/>
            <person name="Rodriguez H."/>
            <person name="Kuang W.-J."/>
            <person name="Dangott L.J."/>
            <person name="Chinkers M."/>
            <person name="Goeddel D.V."/>
            <person name="Garbers D.L."/>
        </authorList>
    </citation>
    <scope>NUCLEOTIDE SEQUENCE [MRNA]</scope>
    <scope>PARTIAL PROTEIN SEQUENCE</scope>
    <source>
        <tissue>Testis</tissue>
    </source>
</reference>
<sequence length="986" mass="111284">MATTRLLFLLVVAVMITMVRSATLHYNPTVINLDRGRPKLHIGMLTSWTNADNSQGTGFPSAGAFPLAIQYANNDMDILHGYDINFEWVDTHCDINLGMAAISDWWKRGFLGVIGPGCGCTYEGRLASALNFPMIDYACDENPVSNKEFYPTFLRTIPPSIQVVDSILLTLDMYDWNQVTVVVENITKYRNVFNTMKEQFDMREEWEILHEEYYAGFDPWDPDAAEPFTDIIQRTKKTTRIYVFFGDSGDLRQFAISALDVGILNSGDYAIVGAVIDLEIRDSQDYHSLEYTLEASDYLEQINQAYEQMFKLREYTRTDDERALEAMKSVLIVTGEPVLRSQAWHIYSAIVIDNALDEPFNGTLELKTDIDMASVYIFDATTELLKALDATLQAGGDMYDGSQVVSNLFNTSYRSKAKADYQFDENGDGVKSYVLLHRIPIPVGDGGMPPGSPGMYPIGTFVRAESGHWSFNKDPDLNPVWHNRDDPPLDMPVCGFHGELCTNWGLYLGTLIPAFIIIFGGGLGYYIYRKRAYEAALDSLVWKVDWKEVQTRESETNSQGFSMKSMVLSAISVISNAEKQQIFATIGTYRGTICAIHAVHKNHIDLTRAVRTELKLMRDMRHDNICPFIGACIDRPHICILMHYCAKGSLQDIMENDDIKLDSMFLASLIADLVKGLVYLHSSEIKSHGHLKSSNCVVDNRWVLQITDYGLHEFRKGQKEDVDLGEHAKLARKLWTAPEHLREGKSMHPGGTPKGDIYSFSIILTEMYSRQEPFHENDLELADIIARVSKGEVPPYRPVLNAVNEAAPDCVLTAIRACWVEDPMERPNIIEVRTMLAPLQKGLKPNILDNMIAIMERYTNNLEELVDERTQELQKEKAKTEQLLHRMLPPSIASQLIKGISVLPETFDMVSIFFSDIVGFLIHFSLSSCRLFCSSQVLPLLVPWLHSLLTLPLHLPLIWMNPLISSFAQPSWSALHSHSCSALHSS</sequence>
<keyword id="KW-0141">cGMP biosynthesis</keyword>
<keyword id="KW-0903">Direct protein sequencing</keyword>
<keyword id="KW-0325">Glycoprotein</keyword>
<keyword id="KW-0342">GTP-binding</keyword>
<keyword id="KW-0456">Lyase</keyword>
<keyword id="KW-0472">Membrane</keyword>
<keyword id="KW-0547">Nucleotide-binding</keyword>
<keyword id="KW-0597">Phosphoprotein</keyword>
<keyword id="KW-0675">Receptor</keyword>
<keyword id="KW-0732">Signal</keyword>
<keyword id="KW-0812">Transmembrane</keyword>
<keyword id="KW-1133">Transmembrane helix</keyword>
<dbReference type="EC" id="4.6.1.2"/>
<dbReference type="EMBL" id="X12874">
    <property type="protein sequence ID" value="CAA31367.1"/>
    <property type="molecule type" value="mRNA"/>
</dbReference>
<dbReference type="PIR" id="S05480">
    <property type="entry name" value="OYURGA"/>
</dbReference>
<dbReference type="SMR" id="P11528"/>
<dbReference type="GO" id="GO:0005886">
    <property type="term" value="C:plasma membrane"/>
    <property type="evidence" value="ECO:0007669"/>
    <property type="project" value="TreeGrafter"/>
</dbReference>
<dbReference type="GO" id="GO:0004016">
    <property type="term" value="F:adenylate cyclase activity"/>
    <property type="evidence" value="ECO:0007669"/>
    <property type="project" value="TreeGrafter"/>
</dbReference>
<dbReference type="GO" id="GO:0005524">
    <property type="term" value="F:ATP binding"/>
    <property type="evidence" value="ECO:0007669"/>
    <property type="project" value="InterPro"/>
</dbReference>
<dbReference type="GO" id="GO:0005525">
    <property type="term" value="F:GTP binding"/>
    <property type="evidence" value="ECO:0007669"/>
    <property type="project" value="UniProtKB-KW"/>
</dbReference>
<dbReference type="GO" id="GO:0004383">
    <property type="term" value="F:guanylate cyclase activity"/>
    <property type="evidence" value="ECO:0007669"/>
    <property type="project" value="UniProtKB-EC"/>
</dbReference>
<dbReference type="GO" id="GO:0001653">
    <property type="term" value="F:peptide receptor activity"/>
    <property type="evidence" value="ECO:0007669"/>
    <property type="project" value="TreeGrafter"/>
</dbReference>
<dbReference type="GO" id="GO:0004672">
    <property type="term" value="F:protein kinase activity"/>
    <property type="evidence" value="ECO:0007669"/>
    <property type="project" value="InterPro"/>
</dbReference>
<dbReference type="GO" id="GO:0007168">
    <property type="term" value="P:receptor guanylyl cyclase signaling pathway"/>
    <property type="evidence" value="ECO:0007669"/>
    <property type="project" value="TreeGrafter"/>
</dbReference>
<dbReference type="CDD" id="cd06370">
    <property type="entry name" value="PBP1_SAP_GC-like"/>
    <property type="match status" value="1"/>
</dbReference>
<dbReference type="CDD" id="cd14042">
    <property type="entry name" value="PK_GC-A_B"/>
    <property type="match status" value="1"/>
</dbReference>
<dbReference type="FunFam" id="1.10.510.10:FF:000420">
    <property type="entry name" value="Guanylate cyclase"/>
    <property type="match status" value="1"/>
</dbReference>
<dbReference type="Gene3D" id="3.40.50.2300">
    <property type="match status" value="2"/>
</dbReference>
<dbReference type="Gene3D" id="3.30.70.1230">
    <property type="entry name" value="Nucleotide cyclase"/>
    <property type="match status" value="1"/>
</dbReference>
<dbReference type="Gene3D" id="1.10.510.10">
    <property type="entry name" value="Transferase(Phosphotransferase) domain 1"/>
    <property type="match status" value="1"/>
</dbReference>
<dbReference type="InterPro" id="IPR001828">
    <property type="entry name" value="ANF_lig-bd_rcpt"/>
</dbReference>
<dbReference type="InterPro" id="IPR050401">
    <property type="entry name" value="Cyclic_nucleotide_synthase"/>
</dbReference>
<dbReference type="InterPro" id="IPR011645">
    <property type="entry name" value="HNOB_dom_associated"/>
</dbReference>
<dbReference type="InterPro" id="IPR011009">
    <property type="entry name" value="Kinase-like_dom_sf"/>
</dbReference>
<dbReference type="InterPro" id="IPR029787">
    <property type="entry name" value="Nucleotide_cyclase"/>
</dbReference>
<dbReference type="InterPro" id="IPR028082">
    <property type="entry name" value="Peripla_BP_I"/>
</dbReference>
<dbReference type="InterPro" id="IPR000719">
    <property type="entry name" value="Prot_kinase_dom"/>
</dbReference>
<dbReference type="InterPro" id="IPR001245">
    <property type="entry name" value="Ser-Thr/Tyr_kinase_cat_dom"/>
</dbReference>
<dbReference type="PANTHER" id="PTHR11920:SF335">
    <property type="entry name" value="GUANYLATE CYCLASE"/>
    <property type="match status" value="1"/>
</dbReference>
<dbReference type="PANTHER" id="PTHR11920">
    <property type="entry name" value="GUANYLYL CYCLASE"/>
    <property type="match status" value="1"/>
</dbReference>
<dbReference type="Pfam" id="PF01094">
    <property type="entry name" value="ANF_receptor"/>
    <property type="match status" value="1"/>
</dbReference>
<dbReference type="Pfam" id="PF07701">
    <property type="entry name" value="HNOBA"/>
    <property type="match status" value="1"/>
</dbReference>
<dbReference type="Pfam" id="PF07714">
    <property type="entry name" value="PK_Tyr_Ser-Thr"/>
    <property type="match status" value="1"/>
</dbReference>
<dbReference type="SUPFAM" id="SSF53822">
    <property type="entry name" value="Periplasmic binding protein-like I"/>
    <property type="match status" value="1"/>
</dbReference>
<dbReference type="SUPFAM" id="SSF56112">
    <property type="entry name" value="Protein kinase-like (PK-like)"/>
    <property type="match status" value="1"/>
</dbReference>
<dbReference type="PROSITE" id="PS50011">
    <property type="entry name" value="PROTEIN_KINASE_DOM"/>
    <property type="match status" value="1"/>
</dbReference>